<comment type="function">
    <text evidence="1">Required for maturation of 30S ribosomal subunits.</text>
</comment>
<comment type="subcellular location">
    <subcellularLocation>
        <location evidence="1">Cytoplasm</location>
    </subcellularLocation>
</comment>
<comment type="similarity">
    <text evidence="1">Belongs to the RimP family.</text>
</comment>
<comment type="sequence caution" evidence="2">
    <conflict type="erroneous initiation">
        <sequence resource="EMBL-CDS" id="AAU40779"/>
    </conflict>
</comment>
<protein>
    <recommendedName>
        <fullName evidence="1">Ribosome maturation factor RimP</fullName>
    </recommendedName>
</protein>
<evidence type="ECO:0000255" key="1">
    <source>
        <dbReference type="HAMAP-Rule" id="MF_01077"/>
    </source>
</evidence>
<evidence type="ECO:0000305" key="2"/>
<gene>
    <name evidence="1" type="primary">rimP</name>
    <name type="ordered locus">BLi01884</name>
    <name type="ordered locus">BL01228</name>
</gene>
<keyword id="KW-0963">Cytoplasm</keyword>
<keyword id="KW-1185">Reference proteome</keyword>
<keyword id="KW-0690">Ribosome biogenesis</keyword>
<accession>Q65JI5</accession>
<accession>Q62UZ0</accession>
<sequence>MSNKVIDTVSEMVQPILDNLQLELVDIEFVKEGQSWFLRVFIDSDDGVDIEECAKVSEALSEKLDEADPIKQNYFLEVSSPGAERPLKKEADFMKALGKNVYIKTYEPIEGNKEFEGELSAFDGENVEVTVMIKTRRKTINIPYDKVAKARLAVSFN</sequence>
<reference key="1">
    <citation type="journal article" date="2004" name="J. Mol. Microbiol. Biotechnol.">
        <title>The complete genome sequence of Bacillus licheniformis DSM13, an organism with great industrial potential.</title>
        <authorList>
            <person name="Veith B."/>
            <person name="Herzberg C."/>
            <person name="Steckel S."/>
            <person name="Feesche J."/>
            <person name="Maurer K.H."/>
            <person name="Ehrenreich P."/>
            <person name="Baeumer S."/>
            <person name="Henne A."/>
            <person name="Liesegang H."/>
            <person name="Merkl R."/>
            <person name="Ehrenreich A."/>
            <person name="Gottschalk G."/>
        </authorList>
    </citation>
    <scope>NUCLEOTIDE SEQUENCE [LARGE SCALE GENOMIC DNA]</scope>
    <source>
        <strain>ATCC 14580 / DSM 13 / JCM 2505 / CCUG 7422 / NBRC 12200 / NCIMB 9375 / NCTC 10341 / NRRL NRS-1264 / Gibson 46</strain>
    </source>
</reference>
<reference key="2">
    <citation type="journal article" date="2004" name="Genome Biol.">
        <title>Complete genome sequence of the industrial bacterium Bacillus licheniformis and comparisons with closely related Bacillus species.</title>
        <authorList>
            <person name="Rey M.W."/>
            <person name="Ramaiya P."/>
            <person name="Nelson B.A."/>
            <person name="Brody-Karpin S.D."/>
            <person name="Zaretsky E.J."/>
            <person name="Tang M."/>
            <person name="Lopez de Leon A."/>
            <person name="Xiang H."/>
            <person name="Gusti V."/>
            <person name="Clausen I.G."/>
            <person name="Olsen P.B."/>
            <person name="Rasmussen M.D."/>
            <person name="Andersen J.T."/>
            <person name="Joergensen P.L."/>
            <person name="Larsen T.S."/>
            <person name="Sorokin A."/>
            <person name="Bolotin A."/>
            <person name="Lapidus A."/>
            <person name="Galleron N."/>
            <person name="Ehrlich S.D."/>
            <person name="Berka R.M."/>
        </authorList>
    </citation>
    <scope>NUCLEOTIDE SEQUENCE [LARGE SCALE GENOMIC DNA]</scope>
    <source>
        <strain>ATCC 14580 / DSM 13 / JCM 2505 / CCUG 7422 / NBRC 12200 / NCIMB 9375 / NCTC 10341 / NRRL NRS-1264 / Gibson 46</strain>
    </source>
</reference>
<dbReference type="EMBL" id="AE017333">
    <property type="protein sequence ID" value="AAU40779.1"/>
    <property type="status" value="ALT_INIT"/>
    <property type="molecule type" value="Genomic_DNA"/>
</dbReference>
<dbReference type="EMBL" id="CP000002">
    <property type="protein sequence ID" value="AAU23419.1"/>
    <property type="molecule type" value="Genomic_DNA"/>
</dbReference>
<dbReference type="RefSeq" id="WP_009328500.1">
    <property type="nucleotide sequence ID" value="NC_006322.1"/>
</dbReference>
<dbReference type="SMR" id="Q65JI5"/>
<dbReference type="STRING" id="279010.BL01228"/>
<dbReference type="GeneID" id="92861523"/>
<dbReference type="KEGG" id="bld:BLi01884"/>
<dbReference type="KEGG" id="bli:BL01228"/>
<dbReference type="PATRIC" id="fig|279010.13.peg.1885"/>
<dbReference type="eggNOG" id="COG0779">
    <property type="taxonomic scope" value="Bacteria"/>
</dbReference>
<dbReference type="HOGENOM" id="CLU_070525_2_0_9"/>
<dbReference type="Proteomes" id="UP000000606">
    <property type="component" value="Chromosome"/>
</dbReference>
<dbReference type="GO" id="GO:0005829">
    <property type="term" value="C:cytosol"/>
    <property type="evidence" value="ECO:0007669"/>
    <property type="project" value="TreeGrafter"/>
</dbReference>
<dbReference type="GO" id="GO:0000028">
    <property type="term" value="P:ribosomal small subunit assembly"/>
    <property type="evidence" value="ECO:0007669"/>
    <property type="project" value="TreeGrafter"/>
</dbReference>
<dbReference type="GO" id="GO:0006412">
    <property type="term" value="P:translation"/>
    <property type="evidence" value="ECO:0007669"/>
    <property type="project" value="TreeGrafter"/>
</dbReference>
<dbReference type="CDD" id="cd01734">
    <property type="entry name" value="YlxS_C"/>
    <property type="match status" value="1"/>
</dbReference>
<dbReference type="FunFam" id="3.30.300.70:FF:000001">
    <property type="entry name" value="Ribosome maturation factor RimP"/>
    <property type="match status" value="1"/>
</dbReference>
<dbReference type="Gene3D" id="2.30.30.180">
    <property type="entry name" value="Ribosome maturation factor RimP, C-terminal domain"/>
    <property type="match status" value="1"/>
</dbReference>
<dbReference type="Gene3D" id="3.30.300.70">
    <property type="entry name" value="RimP-like superfamily, N-terminal"/>
    <property type="match status" value="1"/>
</dbReference>
<dbReference type="HAMAP" id="MF_01077">
    <property type="entry name" value="RimP"/>
    <property type="match status" value="1"/>
</dbReference>
<dbReference type="InterPro" id="IPR003728">
    <property type="entry name" value="Ribosome_maturation_RimP"/>
</dbReference>
<dbReference type="InterPro" id="IPR028998">
    <property type="entry name" value="RimP_C"/>
</dbReference>
<dbReference type="InterPro" id="IPR036847">
    <property type="entry name" value="RimP_C_sf"/>
</dbReference>
<dbReference type="InterPro" id="IPR028989">
    <property type="entry name" value="RimP_N"/>
</dbReference>
<dbReference type="InterPro" id="IPR035956">
    <property type="entry name" value="RimP_N_sf"/>
</dbReference>
<dbReference type="NCBIfam" id="NF000928">
    <property type="entry name" value="PRK00092.1-2"/>
    <property type="match status" value="1"/>
</dbReference>
<dbReference type="PANTHER" id="PTHR33867">
    <property type="entry name" value="RIBOSOME MATURATION FACTOR RIMP"/>
    <property type="match status" value="1"/>
</dbReference>
<dbReference type="PANTHER" id="PTHR33867:SF1">
    <property type="entry name" value="RIBOSOME MATURATION FACTOR RIMP"/>
    <property type="match status" value="1"/>
</dbReference>
<dbReference type="Pfam" id="PF17384">
    <property type="entry name" value="DUF150_C"/>
    <property type="match status" value="1"/>
</dbReference>
<dbReference type="Pfam" id="PF02576">
    <property type="entry name" value="RimP_N"/>
    <property type="match status" value="1"/>
</dbReference>
<dbReference type="SUPFAM" id="SSF74942">
    <property type="entry name" value="YhbC-like, C-terminal domain"/>
    <property type="match status" value="1"/>
</dbReference>
<dbReference type="SUPFAM" id="SSF75420">
    <property type="entry name" value="YhbC-like, N-terminal domain"/>
    <property type="match status" value="1"/>
</dbReference>
<proteinExistence type="inferred from homology"/>
<feature type="chain" id="PRO_0000229218" description="Ribosome maturation factor RimP">
    <location>
        <begin position="1"/>
        <end position="157"/>
    </location>
</feature>
<organism>
    <name type="scientific">Bacillus licheniformis (strain ATCC 14580 / DSM 13 / JCM 2505 / CCUG 7422 / NBRC 12200 / NCIMB 9375 / NCTC 10341 / NRRL NRS-1264 / Gibson 46)</name>
    <dbReference type="NCBI Taxonomy" id="279010"/>
    <lineage>
        <taxon>Bacteria</taxon>
        <taxon>Bacillati</taxon>
        <taxon>Bacillota</taxon>
        <taxon>Bacilli</taxon>
        <taxon>Bacillales</taxon>
        <taxon>Bacillaceae</taxon>
        <taxon>Bacillus</taxon>
    </lineage>
</organism>
<name>RIMP_BACLD</name>